<sequence length="338" mass="38082">MENLDALVAQALEAVQRAEDITTLEQIRVQFLGKKGELTQVMKTLGNLPAEERPKVGALINDAKERVTDVLNARKAGFEEAELNARLAAECIDVTLPGRGQTTGGLHPITRTLERIEQFFTHIGYGIAEGPEVEDDYHNFEALNIPGHHPARAMHDTFYFNANMLLRTHTSPVQVRTMESSQPPIRIVCPGRVYRCDSDITHSPMFHQVEGLLIDRGINFADLKGTIEEFLRVFFEKELAVRFRPSFFPFTEPSAEVDIQCVMCSGKGCRVCKQTGWLEVMGCGMVHPNVLRMSGIDPEEFQGFAFGMGAERLAMLRYGVNDLRLFFDNDLRFLAQFR</sequence>
<organism>
    <name type="scientific">Pseudomonas entomophila (strain L48)</name>
    <dbReference type="NCBI Taxonomy" id="384676"/>
    <lineage>
        <taxon>Bacteria</taxon>
        <taxon>Pseudomonadati</taxon>
        <taxon>Pseudomonadota</taxon>
        <taxon>Gammaproteobacteria</taxon>
        <taxon>Pseudomonadales</taxon>
        <taxon>Pseudomonadaceae</taxon>
        <taxon>Pseudomonas</taxon>
    </lineage>
</organism>
<keyword id="KW-0030">Aminoacyl-tRNA synthetase</keyword>
<keyword id="KW-0067">ATP-binding</keyword>
<keyword id="KW-0963">Cytoplasm</keyword>
<keyword id="KW-0436">Ligase</keyword>
<keyword id="KW-0460">Magnesium</keyword>
<keyword id="KW-0479">Metal-binding</keyword>
<keyword id="KW-0547">Nucleotide-binding</keyword>
<keyword id="KW-0648">Protein biosynthesis</keyword>
<proteinExistence type="inferred from homology"/>
<evidence type="ECO:0000255" key="1">
    <source>
        <dbReference type="HAMAP-Rule" id="MF_00281"/>
    </source>
</evidence>
<comment type="catalytic activity">
    <reaction evidence="1">
        <text>tRNA(Phe) + L-phenylalanine + ATP = L-phenylalanyl-tRNA(Phe) + AMP + diphosphate + H(+)</text>
        <dbReference type="Rhea" id="RHEA:19413"/>
        <dbReference type="Rhea" id="RHEA-COMP:9668"/>
        <dbReference type="Rhea" id="RHEA-COMP:9699"/>
        <dbReference type="ChEBI" id="CHEBI:15378"/>
        <dbReference type="ChEBI" id="CHEBI:30616"/>
        <dbReference type="ChEBI" id="CHEBI:33019"/>
        <dbReference type="ChEBI" id="CHEBI:58095"/>
        <dbReference type="ChEBI" id="CHEBI:78442"/>
        <dbReference type="ChEBI" id="CHEBI:78531"/>
        <dbReference type="ChEBI" id="CHEBI:456215"/>
        <dbReference type="EC" id="6.1.1.20"/>
    </reaction>
</comment>
<comment type="cofactor">
    <cofactor evidence="1">
        <name>Mg(2+)</name>
        <dbReference type="ChEBI" id="CHEBI:18420"/>
    </cofactor>
    <text evidence="1">Binds 2 magnesium ions per tetramer.</text>
</comment>
<comment type="subunit">
    <text evidence="1">Tetramer of two alpha and two beta subunits.</text>
</comment>
<comment type="subcellular location">
    <subcellularLocation>
        <location evidence="1">Cytoplasm</location>
    </subcellularLocation>
</comment>
<comment type="similarity">
    <text evidence="1">Belongs to the class-II aminoacyl-tRNA synthetase family. Phe-tRNA synthetase alpha subunit type 1 subfamily.</text>
</comment>
<protein>
    <recommendedName>
        <fullName evidence="1">Phenylalanine--tRNA ligase alpha subunit</fullName>
        <ecNumber evidence="1">6.1.1.20</ecNumber>
    </recommendedName>
    <alternativeName>
        <fullName evidence="1">Phenylalanyl-tRNA synthetase alpha subunit</fullName>
        <shortName evidence="1">PheRS</shortName>
    </alternativeName>
</protein>
<dbReference type="EC" id="6.1.1.20" evidence="1"/>
<dbReference type="EMBL" id="CT573326">
    <property type="protein sequence ID" value="CAK14802.1"/>
    <property type="molecule type" value="Genomic_DNA"/>
</dbReference>
<dbReference type="RefSeq" id="WP_011533208.1">
    <property type="nucleotide sequence ID" value="NC_008027.1"/>
</dbReference>
<dbReference type="SMR" id="Q1IC11"/>
<dbReference type="STRING" id="384676.PSEEN1967"/>
<dbReference type="GeneID" id="32805190"/>
<dbReference type="KEGG" id="pen:PSEEN1967"/>
<dbReference type="eggNOG" id="COG0016">
    <property type="taxonomic scope" value="Bacteria"/>
</dbReference>
<dbReference type="HOGENOM" id="CLU_025086_0_1_6"/>
<dbReference type="OrthoDB" id="9800719at2"/>
<dbReference type="Proteomes" id="UP000000658">
    <property type="component" value="Chromosome"/>
</dbReference>
<dbReference type="GO" id="GO:0005737">
    <property type="term" value="C:cytoplasm"/>
    <property type="evidence" value="ECO:0007669"/>
    <property type="project" value="UniProtKB-SubCell"/>
</dbReference>
<dbReference type="GO" id="GO:0005524">
    <property type="term" value="F:ATP binding"/>
    <property type="evidence" value="ECO:0007669"/>
    <property type="project" value="UniProtKB-UniRule"/>
</dbReference>
<dbReference type="GO" id="GO:0000287">
    <property type="term" value="F:magnesium ion binding"/>
    <property type="evidence" value="ECO:0007669"/>
    <property type="project" value="UniProtKB-UniRule"/>
</dbReference>
<dbReference type="GO" id="GO:0004826">
    <property type="term" value="F:phenylalanine-tRNA ligase activity"/>
    <property type="evidence" value="ECO:0007669"/>
    <property type="project" value="UniProtKB-UniRule"/>
</dbReference>
<dbReference type="GO" id="GO:0000049">
    <property type="term" value="F:tRNA binding"/>
    <property type="evidence" value="ECO:0007669"/>
    <property type="project" value="InterPro"/>
</dbReference>
<dbReference type="GO" id="GO:0006432">
    <property type="term" value="P:phenylalanyl-tRNA aminoacylation"/>
    <property type="evidence" value="ECO:0007669"/>
    <property type="project" value="UniProtKB-UniRule"/>
</dbReference>
<dbReference type="CDD" id="cd00496">
    <property type="entry name" value="PheRS_alpha_core"/>
    <property type="match status" value="1"/>
</dbReference>
<dbReference type="FunFam" id="3.30.930.10:FF:000003">
    <property type="entry name" value="Phenylalanine--tRNA ligase alpha subunit"/>
    <property type="match status" value="1"/>
</dbReference>
<dbReference type="Gene3D" id="3.30.930.10">
    <property type="entry name" value="Bira Bifunctional Protein, Domain 2"/>
    <property type="match status" value="1"/>
</dbReference>
<dbReference type="HAMAP" id="MF_00281">
    <property type="entry name" value="Phe_tRNA_synth_alpha1"/>
    <property type="match status" value="1"/>
</dbReference>
<dbReference type="InterPro" id="IPR006195">
    <property type="entry name" value="aa-tRNA-synth_II"/>
</dbReference>
<dbReference type="InterPro" id="IPR045864">
    <property type="entry name" value="aa-tRNA-synth_II/BPL/LPL"/>
</dbReference>
<dbReference type="InterPro" id="IPR004529">
    <property type="entry name" value="Phe-tRNA-synth_IIc_asu"/>
</dbReference>
<dbReference type="InterPro" id="IPR004188">
    <property type="entry name" value="Phe-tRNA_ligase_II_N"/>
</dbReference>
<dbReference type="InterPro" id="IPR022911">
    <property type="entry name" value="Phe_tRNA_ligase_alpha1_bac"/>
</dbReference>
<dbReference type="InterPro" id="IPR002319">
    <property type="entry name" value="Phenylalanyl-tRNA_Synthase"/>
</dbReference>
<dbReference type="InterPro" id="IPR010978">
    <property type="entry name" value="tRNA-bd_arm"/>
</dbReference>
<dbReference type="NCBIfam" id="TIGR00468">
    <property type="entry name" value="pheS"/>
    <property type="match status" value="1"/>
</dbReference>
<dbReference type="PANTHER" id="PTHR11538:SF41">
    <property type="entry name" value="PHENYLALANINE--TRNA LIGASE, MITOCHONDRIAL"/>
    <property type="match status" value="1"/>
</dbReference>
<dbReference type="PANTHER" id="PTHR11538">
    <property type="entry name" value="PHENYLALANYL-TRNA SYNTHETASE"/>
    <property type="match status" value="1"/>
</dbReference>
<dbReference type="Pfam" id="PF02912">
    <property type="entry name" value="Phe_tRNA-synt_N"/>
    <property type="match status" value="1"/>
</dbReference>
<dbReference type="Pfam" id="PF01409">
    <property type="entry name" value="tRNA-synt_2d"/>
    <property type="match status" value="1"/>
</dbReference>
<dbReference type="SUPFAM" id="SSF55681">
    <property type="entry name" value="Class II aaRS and biotin synthetases"/>
    <property type="match status" value="1"/>
</dbReference>
<dbReference type="SUPFAM" id="SSF46589">
    <property type="entry name" value="tRNA-binding arm"/>
    <property type="match status" value="1"/>
</dbReference>
<dbReference type="PROSITE" id="PS50862">
    <property type="entry name" value="AA_TRNA_LIGASE_II"/>
    <property type="match status" value="1"/>
</dbReference>
<accession>Q1IC11</accession>
<gene>
    <name evidence="1" type="primary">pheS</name>
    <name type="ordered locus">PSEEN1967</name>
</gene>
<reference key="1">
    <citation type="journal article" date="2006" name="Nat. Biotechnol.">
        <title>Complete genome sequence of the entomopathogenic and metabolically versatile soil bacterium Pseudomonas entomophila.</title>
        <authorList>
            <person name="Vodovar N."/>
            <person name="Vallenet D."/>
            <person name="Cruveiller S."/>
            <person name="Rouy Z."/>
            <person name="Barbe V."/>
            <person name="Acosta C."/>
            <person name="Cattolico L."/>
            <person name="Jubin C."/>
            <person name="Lajus A."/>
            <person name="Segurens B."/>
            <person name="Vacherie B."/>
            <person name="Wincker P."/>
            <person name="Weissenbach J."/>
            <person name="Lemaitre B."/>
            <person name="Medigue C."/>
            <person name="Boccard F."/>
        </authorList>
    </citation>
    <scope>NUCLEOTIDE SEQUENCE [LARGE SCALE GENOMIC DNA]</scope>
    <source>
        <strain>L48</strain>
    </source>
</reference>
<name>SYFA_PSEE4</name>
<feature type="chain" id="PRO_1000006875" description="Phenylalanine--tRNA ligase alpha subunit">
    <location>
        <begin position="1"/>
        <end position="338"/>
    </location>
</feature>
<feature type="binding site" evidence="1">
    <location>
        <position position="252"/>
    </location>
    <ligand>
        <name>Mg(2+)</name>
        <dbReference type="ChEBI" id="CHEBI:18420"/>
        <note>shared with beta subunit</note>
    </ligand>
</feature>